<reference key="1">
    <citation type="journal article" date="2005" name="PLoS Genet.">
        <title>Life in hot carbon monoxide: the complete genome sequence of Carboxydothermus hydrogenoformans Z-2901.</title>
        <authorList>
            <person name="Wu M."/>
            <person name="Ren Q."/>
            <person name="Durkin A.S."/>
            <person name="Daugherty S.C."/>
            <person name="Brinkac L.M."/>
            <person name="Dodson R.J."/>
            <person name="Madupu R."/>
            <person name="Sullivan S.A."/>
            <person name="Kolonay J.F."/>
            <person name="Nelson W.C."/>
            <person name="Tallon L.J."/>
            <person name="Jones K.M."/>
            <person name="Ulrich L.E."/>
            <person name="Gonzalez J.M."/>
            <person name="Zhulin I.B."/>
            <person name="Robb F.T."/>
            <person name="Eisen J.A."/>
        </authorList>
    </citation>
    <scope>NUCLEOTIDE SEQUENCE [LARGE SCALE GENOMIC DNA]</scope>
    <source>
        <strain>ATCC BAA-161 / DSM 6008 / Z-2901</strain>
    </source>
</reference>
<protein>
    <recommendedName>
        <fullName evidence="1">Undecaprenyl-diphosphatase</fullName>
        <ecNumber evidence="1">3.6.1.27</ecNumber>
    </recommendedName>
    <alternativeName>
        <fullName evidence="1">Bacitracin resistance protein</fullName>
    </alternativeName>
    <alternativeName>
        <fullName evidence="1">Undecaprenyl pyrophosphate phosphatase</fullName>
    </alternativeName>
</protein>
<comment type="function">
    <text evidence="1">Catalyzes the dephosphorylation of undecaprenyl diphosphate (UPP). Confers resistance to bacitracin.</text>
</comment>
<comment type="catalytic activity">
    <reaction evidence="1">
        <text>di-trans,octa-cis-undecaprenyl diphosphate + H2O = di-trans,octa-cis-undecaprenyl phosphate + phosphate + H(+)</text>
        <dbReference type="Rhea" id="RHEA:28094"/>
        <dbReference type="ChEBI" id="CHEBI:15377"/>
        <dbReference type="ChEBI" id="CHEBI:15378"/>
        <dbReference type="ChEBI" id="CHEBI:43474"/>
        <dbReference type="ChEBI" id="CHEBI:58405"/>
        <dbReference type="ChEBI" id="CHEBI:60392"/>
        <dbReference type="EC" id="3.6.1.27"/>
    </reaction>
</comment>
<comment type="subcellular location">
    <subcellularLocation>
        <location evidence="1">Cell membrane</location>
        <topology evidence="1">Multi-pass membrane protein</topology>
    </subcellularLocation>
</comment>
<comment type="miscellaneous">
    <text>Bacitracin is thought to be involved in the inhibition of peptidoglycan synthesis by sequestering undecaprenyl diphosphate, thereby reducing the pool of lipid carrier available.</text>
</comment>
<comment type="similarity">
    <text evidence="1">Belongs to the UppP family.</text>
</comment>
<name>UPPP_CARHZ</name>
<keyword id="KW-0046">Antibiotic resistance</keyword>
<keyword id="KW-1003">Cell membrane</keyword>
<keyword id="KW-0133">Cell shape</keyword>
<keyword id="KW-0961">Cell wall biogenesis/degradation</keyword>
<keyword id="KW-0378">Hydrolase</keyword>
<keyword id="KW-0472">Membrane</keyword>
<keyword id="KW-0573">Peptidoglycan synthesis</keyword>
<keyword id="KW-1185">Reference proteome</keyword>
<keyword id="KW-0812">Transmembrane</keyword>
<keyword id="KW-1133">Transmembrane helix</keyword>
<organism>
    <name type="scientific">Carboxydothermus hydrogenoformans (strain ATCC BAA-161 / DSM 6008 / Z-2901)</name>
    <dbReference type="NCBI Taxonomy" id="246194"/>
    <lineage>
        <taxon>Bacteria</taxon>
        <taxon>Bacillati</taxon>
        <taxon>Bacillota</taxon>
        <taxon>Clostridia</taxon>
        <taxon>Thermoanaerobacterales</taxon>
        <taxon>Thermoanaerobacteraceae</taxon>
        <taxon>Carboxydothermus</taxon>
    </lineage>
</organism>
<feature type="chain" id="PRO_0000227612" description="Undecaprenyl-diphosphatase">
    <location>
        <begin position="1"/>
        <end position="261"/>
    </location>
</feature>
<feature type="transmembrane region" description="Helical" evidence="1">
    <location>
        <begin position="39"/>
        <end position="59"/>
    </location>
</feature>
<feature type="transmembrane region" description="Helical" evidence="1">
    <location>
        <begin position="76"/>
        <end position="96"/>
    </location>
</feature>
<feature type="transmembrane region" description="Helical" evidence="1">
    <location>
        <begin position="99"/>
        <end position="119"/>
    </location>
</feature>
<feature type="transmembrane region" description="Helical" evidence="1">
    <location>
        <begin position="173"/>
        <end position="193"/>
    </location>
</feature>
<feature type="transmembrane region" description="Helical" evidence="1">
    <location>
        <begin position="206"/>
        <end position="226"/>
    </location>
</feature>
<feature type="transmembrane region" description="Helical" evidence="1">
    <location>
        <begin position="238"/>
        <end position="258"/>
    </location>
</feature>
<proteinExistence type="inferred from homology"/>
<dbReference type="EC" id="3.6.1.27" evidence="1"/>
<dbReference type="EMBL" id="CP000141">
    <property type="protein sequence ID" value="ABB16228.1"/>
    <property type="molecule type" value="Genomic_DNA"/>
</dbReference>
<dbReference type="RefSeq" id="WP_011344079.1">
    <property type="nucleotide sequence ID" value="NC_007503.1"/>
</dbReference>
<dbReference type="SMR" id="Q3ACY1"/>
<dbReference type="FunCoup" id="Q3ACY1">
    <property type="interactions" value="324"/>
</dbReference>
<dbReference type="STRING" id="246194.CHY_1158"/>
<dbReference type="KEGG" id="chy:CHY_1158"/>
<dbReference type="eggNOG" id="COG1968">
    <property type="taxonomic scope" value="Bacteria"/>
</dbReference>
<dbReference type="HOGENOM" id="CLU_060296_1_2_9"/>
<dbReference type="InParanoid" id="Q3ACY1"/>
<dbReference type="OrthoDB" id="9808289at2"/>
<dbReference type="Proteomes" id="UP000002706">
    <property type="component" value="Chromosome"/>
</dbReference>
<dbReference type="GO" id="GO:0005886">
    <property type="term" value="C:plasma membrane"/>
    <property type="evidence" value="ECO:0007669"/>
    <property type="project" value="UniProtKB-SubCell"/>
</dbReference>
<dbReference type="GO" id="GO:0050380">
    <property type="term" value="F:undecaprenyl-diphosphatase activity"/>
    <property type="evidence" value="ECO:0007669"/>
    <property type="project" value="UniProtKB-UniRule"/>
</dbReference>
<dbReference type="GO" id="GO:0071555">
    <property type="term" value="P:cell wall organization"/>
    <property type="evidence" value="ECO:0007669"/>
    <property type="project" value="UniProtKB-KW"/>
</dbReference>
<dbReference type="GO" id="GO:0009252">
    <property type="term" value="P:peptidoglycan biosynthetic process"/>
    <property type="evidence" value="ECO:0007669"/>
    <property type="project" value="UniProtKB-KW"/>
</dbReference>
<dbReference type="GO" id="GO:0008360">
    <property type="term" value="P:regulation of cell shape"/>
    <property type="evidence" value="ECO:0007669"/>
    <property type="project" value="UniProtKB-KW"/>
</dbReference>
<dbReference type="GO" id="GO:0046677">
    <property type="term" value="P:response to antibiotic"/>
    <property type="evidence" value="ECO:0007669"/>
    <property type="project" value="UniProtKB-UniRule"/>
</dbReference>
<dbReference type="HAMAP" id="MF_01006">
    <property type="entry name" value="Undec_diphosphatase"/>
    <property type="match status" value="1"/>
</dbReference>
<dbReference type="InterPro" id="IPR003824">
    <property type="entry name" value="UppP"/>
</dbReference>
<dbReference type="PANTHER" id="PTHR30622">
    <property type="entry name" value="UNDECAPRENYL-DIPHOSPHATASE"/>
    <property type="match status" value="1"/>
</dbReference>
<dbReference type="PANTHER" id="PTHR30622:SF4">
    <property type="entry name" value="UNDECAPRENYL-DIPHOSPHATASE"/>
    <property type="match status" value="1"/>
</dbReference>
<dbReference type="Pfam" id="PF02673">
    <property type="entry name" value="BacA"/>
    <property type="match status" value="1"/>
</dbReference>
<sequence>MNSFQALILGLVQGLTEYLPVSSSGHLVLLQKIFGLKENVLLFDILVHLGTLVPLLIIFRDEILAIIKKPWGRLPLLIIAGTVPTALIGLGFKDFFERLFVSGSTLGIEFIITGLILWLAERQKSGRKNLEKTTFLDAIFVGVAQGLAILPAISRSGLTISGALIRGLNREWAAKFSFLLSIPAILGAAVLDLKSFVEQNANLAGIDLMPFIVGFFAAMLSGYFAVKFMLEILRKGKLTWFSYYVWILGVTILVLQAAGKF</sequence>
<accession>Q3ACY1</accession>
<gene>
    <name evidence="1" type="primary">uppP</name>
    <name type="ordered locus">CHY_1158</name>
</gene>
<evidence type="ECO:0000255" key="1">
    <source>
        <dbReference type="HAMAP-Rule" id="MF_01006"/>
    </source>
</evidence>